<proteinExistence type="inferred from homology"/>
<dbReference type="EMBL" id="CP001074">
    <property type="protein sequence ID" value="ACE92652.1"/>
    <property type="molecule type" value="Genomic_DNA"/>
</dbReference>
<dbReference type="SMR" id="B3PYY8"/>
<dbReference type="KEGG" id="rec:RHECIAT_CH0003714"/>
<dbReference type="eggNOG" id="COG0217">
    <property type="taxonomic scope" value="Bacteria"/>
</dbReference>
<dbReference type="HOGENOM" id="CLU_062974_2_2_5"/>
<dbReference type="Proteomes" id="UP000008817">
    <property type="component" value="Chromosome"/>
</dbReference>
<dbReference type="GO" id="GO:0005829">
    <property type="term" value="C:cytosol"/>
    <property type="evidence" value="ECO:0007669"/>
    <property type="project" value="TreeGrafter"/>
</dbReference>
<dbReference type="GO" id="GO:0003677">
    <property type="term" value="F:DNA binding"/>
    <property type="evidence" value="ECO:0007669"/>
    <property type="project" value="UniProtKB-UniRule"/>
</dbReference>
<dbReference type="GO" id="GO:0006355">
    <property type="term" value="P:regulation of DNA-templated transcription"/>
    <property type="evidence" value="ECO:0007669"/>
    <property type="project" value="UniProtKB-UniRule"/>
</dbReference>
<dbReference type="FunFam" id="1.10.10.200:FF:000002">
    <property type="entry name" value="Probable transcriptional regulatory protein CLM62_37755"/>
    <property type="match status" value="1"/>
</dbReference>
<dbReference type="Gene3D" id="1.10.10.200">
    <property type="match status" value="1"/>
</dbReference>
<dbReference type="Gene3D" id="3.30.70.980">
    <property type="match status" value="2"/>
</dbReference>
<dbReference type="HAMAP" id="MF_00693">
    <property type="entry name" value="Transcrip_reg_TACO1"/>
    <property type="match status" value="1"/>
</dbReference>
<dbReference type="InterPro" id="IPR017856">
    <property type="entry name" value="Integrase-like_N"/>
</dbReference>
<dbReference type="InterPro" id="IPR048300">
    <property type="entry name" value="TACO1_YebC-like_2nd/3rd_dom"/>
</dbReference>
<dbReference type="InterPro" id="IPR049083">
    <property type="entry name" value="TACO1_YebC_N"/>
</dbReference>
<dbReference type="InterPro" id="IPR002876">
    <property type="entry name" value="Transcrip_reg_TACO1-like"/>
</dbReference>
<dbReference type="InterPro" id="IPR026564">
    <property type="entry name" value="Transcrip_reg_TACO1-like_dom3"/>
</dbReference>
<dbReference type="InterPro" id="IPR029072">
    <property type="entry name" value="YebC-like"/>
</dbReference>
<dbReference type="NCBIfam" id="NF001030">
    <property type="entry name" value="PRK00110.1"/>
    <property type="match status" value="1"/>
</dbReference>
<dbReference type="NCBIfam" id="NF009044">
    <property type="entry name" value="PRK12378.1"/>
    <property type="match status" value="1"/>
</dbReference>
<dbReference type="NCBIfam" id="TIGR01033">
    <property type="entry name" value="YebC/PmpR family DNA-binding transcriptional regulator"/>
    <property type="match status" value="1"/>
</dbReference>
<dbReference type="PANTHER" id="PTHR12532:SF6">
    <property type="entry name" value="TRANSCRIPTIONAL REGULATORY PROTEIN YEBC-RELATED"/>
    <property type="match status" value="1"/>
</dbReference>
<dbReference type="PANTHER" id="PTHR12532">
    <property type="entry name" value="TRANSLATIONAL ACTIVATOR OF CYTOCHROME C OXIDASE 1"/>
    <property type="match status" value="1"/>
</dbReference>
<dbReference type="Pfam" id="PF20772">
    <property type="entry name" value="TACO1_YebC_N"/>
    <property type="match status" value="1"/>
</dbReference>
<dbReference type="Pfam" id="PF01709">
    <property type="entry name" value="Transcrip_reg"/>
    <property type="match status" value="1"/>
</dbReference>
<dbReference type="SUPFAM" id="SSF75625">
    <property type="entry name" value="YebC-like"/>
    <property type="match status" value="1"/>
</dbReference>
<sequence length="248" mass="26749">MAGHSQFKNIMHRKGRQDAVRSKMFSKLAREITVAAKAGLPDPTMNARLRLAIQNAKAQSMPKDNIDRAIKKAAGADGENYDEVRYEGYGPGGTAIIVEALTDNRNRTASNVRSIFTKAGGALGETGSVSFSFDHVGEITYKLSVGDADKVMEAAIEAGADDVETDEEGHYITCAFEALGDVSKALESGLGEAETVKAVWRAQNNVPVDEEKAQSLMKLIDSLEDDDDVQNVYSNFEVSEEVLAKLSA</sequence>
<reference key="1">
    <citation type="journal article" date="2010" name="Appl. Environ. Microbiol.">
        <title>Conserved symbiotic plasmid DNA sequences in the multireplicon pangenomic structure of Rhizobium etli.</title>
        <authorList>
            <person name="Gonzalez V."/>
            <person name="Acosta J.L."/>
            <person name="Santamaria R.I."/>
            <person name="Bustos P."/>
            <person name="Fernandez J.L."/>
            <person name="Hernandez Gonzalez I.L."/>
            <person name="Diaz R."/>
            <person name="Flores M."/>
            <person name="Palacios R."/>
            <person name="Mora J."/>
            <person name="Davila G."/>
        </authorList>
    </citation>
    <scope>NUCLEOTIDE SEQUENCE [LARGE SCALE GENOMIC DNA]</scope>
    <source>
        <strain>CIAT 652</strain>
    </source>
</reference>
<gene>
    <name type="ordered locus">RHECIAT_CH0003714</name>
</gene>
<keyword id="KW-0963">Cytoplasm</keyword>
<keyword id="KW-0238">DNA-binding</keyword>
<keyword id="KW-0804">Transcription</keyword>
<keyword id="KW-0805">Transcription regulation</keyword>
<organism>
    <name type="scientific">Rhizobium etli (strain CIAT 652)</name>
    <dbReference type="NCBI Taxonomy" id="491916"/>
    <lineage>
        <taxon>Bacteria</taxon>
        <taxon>Pseudomonadati</taxon>
        <taxon>Pseudomonadota</taxon>
        <taxon>Alphaproteobacteria</taxon>
        <taxon>Hyphomicrobiales</taxon>
        <taxon>Rhizobiaceae</taxon>
        <taxon>Rhizobium/Agrobacterium group</taxon>
        <taxon>Rhizobium</taxon>
    </lineage>
</organism>
<evidence type="ECO:0000255" key="1">
    <source>
        <dbReference type="HAMAP-Rule" id="MF_00693"/>
    </source>
</evidence>
<comment type="subcellular location">
    <subcellularLocation>
        <location evidence="1">Cytoplasm</location>
    </subcellularLocation>
</comment>
<comment type="similarity">
    <text evidence="1">Belongs to the TACO1 family.</text>
</comment>
<feature type="chain" id="PRO_1000132232" description="Probable transcriptional regulatory protein RHECIAT_CH0003714">
    <location>
        <begin position="1"/>
        <end position="248"/>
    </location>
</feature>
<protein>
    <recommendedName>
        <fullName evidence="1">Probable transcriptional regulatory protein RHECIAT_CH0003714</fullName>
    </recommendedName>
</protein>
<accession>B3PYY8</accession>
<name>Y3714_RHIE6</name>